<gene>
    <name type="primary">rplV</name>
    <name type="ordered locus">DR_0316</name>
</gene>
<keyword id="KW-0002">3D-structure</keyword>
<keyword id="KW-0903">Direct protein sequencing</keyword>
<keyword id="KW-1185">Reference proteome</keyword>
<keyword id="KW-0687">Ribonucleoprotein</keyword>
<keyword id="KW-0689">Ribosomal protein</keyword>
<keyword id="KW-0694">RNA-binding</keyword>
<keyword id="KW-0699">rRNA-binding</keyword>
<accession>Q9RXJ7</accession>
<protein>
    <recommendedName>
        <fullName evidence="8">Large ribosomal subunit protein uL22</fullName>
    </recommendedName>
    <alternativeName>
        <fullName>50S ribosomal protein L22</fullName>
    </alternativeName>
</protein>
<feature type="chain" id="PRO_0000125151" description="Large ribosomal subunit protein uL22">
    <location>
        <begin position="1"/>
        <end position="134"/>
    </location>
</feature>
<feature type="helix" evidence="13">
    <location>
        <begin position="11"/>
        <end position="17"/>
    </location>
</feature>
<feature type="strand" evidence="13">
    <location>
        <begin position="25"/>
        <end position="33"/>
    </location>
</feature>
<feature type="helix" evidence="13">
    <location>
        <begin position="35"/>
        <end position="45"/>
    </location>
</feature>
<feature type="strand" evidence="9">
    <location>
        <begin position="46"/>
        <end position="49"/>
    </location>
</feature>
<feature type="helix" evidence="13">
    <location>
        <begin position="51"/>
        <end position="56"/>
    </location>
</feature>
<feature type="helix" evidence="13">
    <location>
        <begin position="57"/>
        <end position="59"/>
    </location>
</feature>
<feature type="strand" evidence="11">
    <location>
        <begin position="62"/>
        <end position="64"/>
    </location>
</feature>
<feature type="helix" evidence="13">
    <location>
        <begin position="65"/>
        <end position="79"/>
    </location>
</feature>
<feature type="turn" evidence="13">
    <location>
        <begin position="80"/>
        <end position="83"/>
    </location>
</feature>
<feature type="helix" evidence="10">
    <location>
        <begin position="87"/>
        <end position="89"/>
    </location>
</feature>
<feature type="strand" evidence="13">
    <location>
        <begin position="90"/>
        <end position="99"/>
    </location>
</feature>
<feature type="strand" evidence="13">
    <location>
        <begin position="103"/>
        <end position="108"/>
    </location>
</feature>
<feature type="helix" evidence="12">
    <location>
        <begin position="110"/>
        <end position="112"/>
    </location>
</feature>
<feature type="strand" evidence="13">
    <location>
        <begin position="114"/>
        <end position="119"/>
    </location>
</feature>
<feature type="strand" evidence="13">
    <location>
        <begin position="122"/>
        <end position="130"/>
    </location>
</feature>
<organism>
    <name type="scientific">Deinococcus radiodurans (strain ATCC 13939 / DSM 20539 / JCM 16871 / CCUG 27074 / LMG 4051 / NBRC 15346 / NCIMB 9279 / VKM B-1422 / R1)</name>
    <dbReference type="NCBI Taxonomy" id="243230"/>
    <lineage>
        <taxon>Bacteria</taxon>
        <taxon>Thermotogati</taxon>
        <taxon>Deinococcota</taxon>
        <taxon>Deinococci</taxon>
        <taxon>Deinococcales</taxon>
        <taxon>Deinococcaceae</taxon>
        <taxon>Deinococcus</taxon>
    </lineage>
</organism>
<name>RL22_DEIRA</name>
<sequence length="134" mass="15159">MTAPEQTFRNKKQRKQQVKLRKPGFAVAKYVRMSPRKVRLVVDVIRGKSVQDAEDLLRFIPRSASEPVAKVLNSAKANALHNDEMLEDRLFVKEAYVDAGPTLKRLIPRARGSANIIKKRTSHITIIVAEKGNK</sequence>
<evidence type="ECO:0000250" key="1"/>
<evidence type="ECO:0000269" key="2">
    <source>
    </source>
</evidence>
<evidence type="ECO:0000269" key="3">
    <source>
    </source>
</evidence>
<evidence type="ECO:0000269" key="4">
    <source>
    </source>
</evidence>
<evidence type="ECO:0000269" key="5">
    <source>
    </source>
</evidence>
<evidence type="ECO:0000269" key="6">
    <source>
    </source>
</evidence>
<evidence type="ECO:0000269" key="7">
    <source>
    </source>
</evidence>
<evidence type="ECO:0000305" key="8"/>
<evidence type="ECO:0007829" key="9">
    <source>
        <dbReference type="PDB" id="2ZJQ"/>
    </source>
</evidence>
<evidence type="ECO:0007829" key="10">
    <source>
        <dbReference type="PDB" id="2ZJR"/>
    </source>
</evidence>
<evidence type="ECO:0007829" key="11">
    <source>
        <dbReference type="PDB" id="3DLL"/>
    </source>
</evidence>
<evidence type="ECO:0007829" key="12">
    <source>
        <dbReference type="PDB" id="4IO9"/>
    </source>
</evidence>
<evidence type="ECO:0007829" key="13">
    <source>
        <dbReference type="PDB" id="5DM6"/>
    </source>
</evidence>
<proteinExistence type="evidence at protein level"/>
<comment type="function">
    <text evidence="1">This protein binds specifically to 23S rRNA; its binding is stimulated by other ribosomal proteins, e.g. L4, L17, and L20. It is important during the early stages of 50S assembly. It makes multiple contacts with different domains of the 23S rRNA in the assembled 50S subunit and ribosome (By similarity).</text>
</comment>
<comment type="function">
    <text>The globular domain of the protein is located by the polypeptide exit tunnel on the outside of the subunit while an extended beta-hairpin forms part of the wall of the tunnel. Forms a pair of 'tweezers' with L32 that hold together two different domains of the 23S rRNA. Interacts with the tunnel-blocking modified macrolide azithromycin. Upon binding of the macrolide troleadomycin to the ribosome, the tip of the beta-hairpin is displaced, which severely restricts the tunnel. This and experiments in E.coli have led to the suggestion that it is part of the gating mechanism involved in translation arrest in the absence of the protein export system.</text>
</comment>
<comment type="subunit">
    <text evidence="2 3 4 5 6 7">Part of the 50S ribosomal subunit. Contacts protein L32.</text>
</comment>
<comment type="similarity">
    <text evidence="8">Belongs to the universal ribosomal protein uL22 family.</text>
</comment>
<dbReference type="EMBL" id="AE000513">
    <property type="protein sequence ID" value="AAF09897.1"/>
    <property type="molecule type" value="Genomic_DNA"/>
</dbReference>
<dbReference type="PIR" id="D75534">
    <property type="entry name" value="D75534"/>
</dbReference>
<dbReference type="RefSeq" id="NP_294039.1">
    <property type="nucleotide sequence ID" value="NC_001263.1"/>
</dbReference>
<dbReference type="RefSeq" id="WP_010886961.1">
    <property type="nucleotide sequence ID" value="NC_001263.1"/>
</dbReference>
<dbReference type="PDB" id="1J5A">
    <property type="method" value="X-ray"/>
    <property type="resolution" value="3.50 A"/>
    <property type="chains" value="L=1-134"/>
</dbReference>
<dbReference type="PDB" id="1JZX">
    <property type="method" value="X-ray"/>
    <property type="resolution" value="3.10 A"/>
    <property type="chains" value="L=1-134"/>
</dbReference>
<dbReference type="PDB" id="1JZY">
    <property type="method" value="X-ray"/>
    <property type="resolution" value="3.50 A"/>
    <property type="chains" value="L=1-134"/>
</dbReference>
<dbReference type="PDB" id="1JZZ">
    <property type="method" value="X-ray"/>
    <property type="resolution" value="3.80 A"/>
    <property type="chains" value="L=1-134"/>
</dbReference>
<dbReference type="PDB" id="1K01">
    <property type="method" value="X-ray"/>
    <property type="resolution" value="3.50 A"/>
    <property type="chains" value="L=1-134"/>
</dbReference>
<dbReference type="PDB" id="1NKW">
    <property type="method" value="X-ray"/>
    <property type="resolution" value="3.10 A"/>
    <property type="chains" value="Q=1-134"/>
</dbReference>
<dbReference type="PDB" id="1NWX">
    <property type="method" value="X-ray"/>
    <property type="resolution" value="3.50 A"/>
    <property type="chains" value="Q=1-134"/>
</dbReference>
<dbReference type="PDB" id="1NWY">
    <property type="method" value="X-ray"/>
    <property type="resolution" value="3.30 A"/>
    <property type="chains" value="Q=1-134"/>
</dbReference>
<dbReference type="PDB" id="1OND">
    <property type="method" value="X-ray"/>
    <property type="resolution" value="3.40 A"/>
    <property type="chains" value="Q=1-134"/>
</dbReference>
<dbReference type="PDB" id="1SM1">
    <property type="method" value="X-ray"/>
    <property type="resolution" value="3.42 A"/>
    <property type="chains" value="Q=1-134"/>
</dbReference>
<dbReference type="PDB" id="1XBP">
    <property type="method" value="X-ray"/>
    <property type="resolution" value="3.50 A"/>
    <property type="chains" value="Q=1-134"/>
</dbReference>
<dbReference type="PDB" id="2ZJP">
    <property type="method" value="X-ray"/>
    <property type="resolution" value="3.70 A"/>
    <property type="chains" value="P=1-134"/>
</dbReference>
<dbReference type="PDB" id="2ZJQ">
    <property type="method" value="X-ray"/>
    <property type="resolution" value="3.30 A"/>
    <property type="chains" value="P=1-134"/>
</dbReference>
<dbReference type="PDB" id="2ZJR">
    <property type="method" value="X-ray"/>
    <property type="resolution" value="2.91 A"/>
    <property type="chains" value="P=1-134"/>
</dbReference>
<dbReference type="PDB" id="3CF5">
    <property type="method" value="X-ray"/>
    <property type="resolution" value="3.30 A"/>
    <property type="chains" value="P=1-134"/>
</dbReference>
<dbReference type="PDB" id="3DLL">
    <property type="method" value="X-ray"/>
    <property type="resolution" value="3.50 A"/>
    <property type="chains" value="P=1-134"/>
</dbReference>
<dbReference type="PDB" id="3PIO">
    <property type="method" value="X-ray"/>
    <property type="resolution" value="3.25 A"/>
    <property type="chains" value="P=1-134"/>
</dbReference>
<dbReference type="PDB" id="3PIP">
    <property type="method" value="X-ray"/>
    <property type="resolution" value="3.45 A"/>
    <property type="chains" value="P=1-134"/>
</dbReference>
<dbReference type="PDB" id="4IO9">
    <property type="method" value="X-ray"/>
    <property type="resolution" value="3.20 A"/>
    <property type="chains" value="P=1-134"/>
</dbReference>
<dbReference type="PDB" id="4IOA">
    <property type="method" value="X-ray"/>
    <property type="resolution" value="3.20 A"/>
    <property type="chains" value="P=1-134"/>
</dbReference>
<dbReference type="PDB" id="4IOC">
    <property type="method" value="X-ray"/>
    <property type="resolution" value="3.60 A"/>
    <property type="chains" value="P=1-134"/>
</dbReference>
<dbReference type="PDB" id="4U67">
    <property type="method" value="X-ray"/>
    <property type="resolution" value="3.65 A"/>
    <property type="chains" value="P=1-134"/>
</dbReference>
<dbReference type="PDB" id="4V49">
    <property type="method" value="X-ray"/>
    <property type="resolution" value="8.70 A"/>
    <property type="chains" value="Q=5-134"/>
</dbReference>
<dbReference type="PDB" id="4V4A">
    <property type="method" value="X-ray"/>
    <property type="resolution" value="9.50 A"/>
    <property type="chains" value="Q=5-134"/>
</dbReference>
<dbReference type="PDB" id="4V4G">
    <property type="method" value="X-ray"/>
    <property type="resolution" value="11.50 A"/>
    <property type="chains" value="T=5-134"/>
</dbReference>
<dbReference type="PDB" id="4WFN">
    <property type="method" value="X-ray"/>
    <property type="resolution" value="3.54 A"/>
    <property type="chains" value="P=1-134"/>
</dbReference>
<dbReference type="PDB" id="5DM6">
    <property type="method" value="X-ray"/>
    <property type="resolution" value="2.90 A"/>
    <property type="chains" value="P=8-134"/>
</dbReference>
<dbReference type="PDB" id="5DM7">
    <property type="method" value="X-ray"/>
    <property type="resolution" value="3.00 A"/>
    <property type="chains" value="P=8-134"/>
</dbReference>
<dbReference type="PDB" id="5JVG">
    <property type="method" value="X-ray"/>
    <property type="resolution" value="3.43 A"/>
    <property type="chains" value="P=1-134"/>
</dbReference>
<dbReference type="PDB" id="5JVH">
    <property type="method" value="X-ray"/>
    <property type="resolution" value="3.58 A"/>
    <property type="chains" value="P=1-134"/>
</dbReference>
<dbReference type="PDB" id="7A0R">
    <property type="method" value="X-ray"/>
    <property type="resolution" value="3.30 A"/>
    <property type="chains" value="P=6-133"/>
</dbReference>
<dbReference type="PDB" id="7A0S">
    <property type="method" value="X-ray"/>
    <property type="resolution" value="3.22 A"/>
    <property type="chains" value="P=1-134"/>
</dbReference>
<dbReference type="PDB" id="7A18">
    <property type="method" value="X-ray"/>
    <property type="resolution" value="3.40 A"/>
    <property type="chains" value="P=6-134"/>
</dbReference>
<dbReference type="PDBsum" id="1J5A"/>
<dbReference type="PDBsum" id="1JZX"/>
<dbReference type="PDBsum" id="1JZY"/>
<dbReference type="PDBsum" id="1JZZ"/>
<dbReference type="PDBsum" id="1K01"/>
<dbReference type="PDBsum" id="1NKW"/>
<dbReference type="PDBsum" id="1NWX"/>
<dbReference type="PDBsum" id="1NWY"/>
<dbReference type="PDBsum" id="1OND"/>
<dbReference type="PDBsum" id="1SM1"/>
<dbReference type="PDBsum" id="1XBP"/>
<dbReference type="PDBsum" id="2ZJP"/>
<dbReference type="PDBsum" id="2ZJQ"/>
<dbReference type="PDBsum" id="2ZJR"/>
<dbReference type="PDBsum" id="3CF5"/>
<dbReference type="PDBsum" id="3DLL"/>
<dbReference type="PDBsum" id="3PIO"/>
<dbReference type="PDBsum" id="3PIP"/>
<dbReference type="PDBsum" id="4IO9"/>
<dbReference type="PDBsum" id="4IOA"/>
<dbReference type="PDBsum" id="4IOC"/>
<dbReference type="PDBsum" id="4U67"/>
<dbReference type="PDBsum" id="4V49"/>
<dbReference type="PDBsum" id="4V4A"/>
<dbReference type="PDBsum" id="4V4G"/>
<dbReference type="PDBsum" id="4WFN"/>
<dbReference type="PDBsum" id="5DM6"/>
<dbReference type="PDBsum" id="5DM7"/>
<dbReference type="PDBsum" id="5JVG"/>
<dbReference type="PDBsum" id="5JVH"/>
<dbReference type="PDBsum" id="7A0R"/>
<dbReference type="PDBsum" id="7A0S"/>
<dbReference type="PDBsum" id="7A18"/>
<dbReference type="SMR" id="Q9RXJ7"/>
<dbReference type="FunCoup" id="Q9RXJ7">
    <property type="interactions" value="437"/>
</dbReference>
<dbReference type="IntAct" id="Q9RXJ7">
    <property type="interactions" value="1"/>
</dbReference>
<dbReference type="STRING" id="243230.DR_0316"/>
<dbReference type="PaxDb" id="243230-DR_0316"/>
<dbReference type="EnsemblBacteria" id="AAF09897">
    <property type="protein sequence ID" value="AAF09897"/>
    <property type="gene ID" value="DR_0316"/>
</dbReference>
<dbReference type="GeneID" id="69516548"/>
<dbReference type="KEGG" id="dra:DR_0316"/>
<dbReference type="PATRIC" id="fig|243230.17.peg.482"/>
<dbReference type="eggNOG" id="COG0091">
    <property type="taxonomic scope" value="Bacteria"/>
</dbReference>
<dbReference type="HOGENOM" id="CLU_083987_3_1_0"/>
<dbReference type="InParanoid" id="Q9RXJ7"/>
<dbReference type="OrthoDB" id="9805969at2"/>
<dbReference type="EvolutionaryTrace" id="Q9RXJ7"/>
<dbReference type="Proteomes" id="UP000002524">
    <property type="component" value="Chromosome 1"/>
</dbReference>
<dbReference type="GO" id="GO:0022625">
    <property type="term" value="C:cytosolic large ribosomal subunit"/>
    <property type="evidence" value="ECO:0000318"/>
    <property type="project" value="GO_Central"/>
</dbReference>
<dbReference type="GO" id="GO:0019843">
    <property type="term" value="F:rRNA binding"/>
    <property type="evidence" value="ECO:0007669"/>
    <property type="project" value="UniProtKB-UniRule"/>
</dbReference>
<dbReference type="GO" id="GO:0003735">
    <property type="term" value="F:structural constituent of ribosome"/>
    <property type="evidence" value="ECO:0000318"/>
    <property type="project" value="GO_Central"/>
</dbReference>
<dbReference type="GO" id="GO:0006412">
    <property type="term" value="P:translation"/>
    <property type="evidence" value="ECO:0000318"/>
    <property type="project" value="GO_Central"/>
</dbReference>
<dbReference type="CDD" id="cd00336">
    <property type="entry name" value="Ribosomal_L22"/>
    <property type="match status" value="1"/>
</dbReference>
<dbReference type="FunFam" id="3.90.470.10:FF:000011">
    <property type="entry name" value="50S ribosomal protein L22"/>
    <property type="match status" value="1"/>
</dbReference>
<dbReference type="Gene3D" id="3.90.470.10">
    <property type="entry name" value="Ribosomal protein L22/L17"/>
    <property type="match status" value="1"/>
</dbReference>
<dbReference type="HAMAP" id="MF_01331_B">
    <property type="entry name" value="Ribosomal_uL22_B"/>
    <property type="match status" value="1"/>
</dbReference>
<dbReference type="InterPro" id="IPR001063">
    <property type="entry name" value="Ribosomal_uL22"/>
</dbReference>
<dbReference type="InterPro" id="IPR005727">
    <property type="entry name" value="Ribosomal_uL22_bac/chlpt-type"/>
</dbReference>
<dbReference type="InterPro" id="IPR047867">
    <property type="entry name" value="Ribosomal_uL22_bac/org-type"/>
</dbReference>
<dbReference type="InterPro" id="IPR018260">
    <property type="entry name" value="Ribosomal_uL22_CS"/>
</dbReference>
<dbReference type="InterPro" id="IPR036394">
    <property type="entry name" value="Ribosomal_uL22_sf"/>
</dbReference>
<dbReference type="NCBIfam" id="TIGR01044">
    <property type="entry name" value="rplV_bact"/>
    <property type="match status" value="1"/>
</dbReference>
<dbReference type="PANTHER" id="PTHR13501">
    <property type="entry name" value="CHLOROPLAST 50S RIBOSOMAL PROTEIN L22-RELATED"/>
    <property type="match status" value="1"/>
</dbReference>
<dbReference type="PANTHER" id="PTHR13501:SF8">
    <property type="entry name" value="LARGE RIBOSOMAL SUBUNIT PROTEIN UL22M"/>
    <property type="match status" value="1"/>
</dbReference>
<dbReference type="Pfam" id="PF00237">
    <property type="entry name" value="Ribosomal_L22"/>
    <property type="match status" value="1"/>
</dbReference>
<dbReference type="SUPFAM" id="SSF54843">
    <property type="entry name" value="Ribosomal protein L22"/>
    <property type="match status" value="1"/>
</dbReference>
<dbReference type="PROSITE" id="PS00464">
    <property type="entry name" value="RIBOSOMAL_L22"/>
    <property type="match status" value="1"/>
</dbReference>
<reference key="1">
    <citation type="journal article" date="1999" name="Science">
        <title>Genome sequence of the radioresistant bacterium Deinococcus radiodurans R1.</title>
        <authorList>
            <person name="White O."/>
            <person name="Eisen J.A."/>
            <person name="Heidelberg J.F."/>
            <person name="Hickey E.K."/>
            <person name="Peterson J.D."/>
            <person name="Dodson R.J."/>
            <person name="Haft D.H."/>
            <person name="Gwinn M.L."/>
            <person name="Nelson W.C."/>
            <person name="Richardson D.L."/>
            <person name="Moffat K.S."/>
            <person name="Qin H."/>
            <person name="Jiang L."/>
            <person name="Pamphile W."/>
            <person name="Crosby M."/>
            <person name="Shen M."/>
            <person name="Vamathevan J.J."/>
            <person name="Lam P."/>
            <person name="McDonald L.A."/>
            <person name="Utterback T.R."/>
            <person name="Zalewski C."/>
            <person name="Makarova K.S."/>
            <person name="Aravind L."/>
            <person name="Daly M.J."/>
            <person name="Minton K.W."/>
            <person name="Fleischmann R.D."/>
            <person name="Ketchum K.A."/>
            <person name="Nelson K.E."/>
            <person name="Salzberg S.L."/>
            <person name="Smith H.O."/>
            <person name="Venter J.C."/>
            <person name="Fraser C.M."/>
        </authorList>
    </citation>
    <scope>NUCLEOTIDE SEQUENCE [LARGE SCALE GENOMIC DNA]</scope>
    <source>
        <strain>ATCC 13939 / DSM 20539 / JCM 16871 / CCUG 27074 / LMG 4051 / NBRC 15346 / NCIMB 9279 / VKM B-1422 / R1</strain>
    </source>
</reference>
<reference key="2">
    <citation type="journal article" date="2001" name="Cell">
        <title>High resolution structure of the large ribosomal subunit from a mesophilic eubacterium.</title>
        <authorList>
            <person name="Harms J."/>
            <person name="Schluenzen F."/>
            <person name="Zarivach R."/>
            <person name="Bashan A."/>
            <person name="Gat S."/>
            <person name="Agmon I."/>
            <person name="Bartels H."/>
            <person name="Franceschi F."/>
            <person name="Yonath A."/>
        </authorList>
    </citation>
    <scope>X-RAY CRYSTALLOGRAPHY (3.1 ANGSTROMS) OF THE 50S SUBUNIT</scope>
    <scope>PROTEIN SEQUENCE OF 1-5</scope>
    <source>
        <strain>ATCC 13939 / DSM 20539 / JCM 16871 / CCUG 27074 / LMG 4051 / NBRC 15346 / NCIMB 9279 / VKM B-1422 / R1</strain>
    </source>
</reference>
<reference key="3">
    <citation type="journal article" date="2001" name="Nature">
        <title>Structural basis for the interaction of antibiotics with the peptidyl transferase centre in eubacteria.</title>
        <authorList>
            <person name="Schluenzen F."/>
            <person name="Zarivach R."/>
            <person name="Harms J."/>
            <person name="Bashan A."/>
            <person name="Tocilj A."/>
            <person name="Albrecht R."/>
            <person name="Yonath A."/>
            <person name="Franceschi F."/>
        </authorList>
    </citation>
    <scope>X-RAY CRYSTALLOGRAPHY (3.1 ANGSTROMS) OF THE 50S SUBUNIT IN COMPLEX WITH FIVE ANTIBIOTICS</scope>
    <source>
        <strain>ATCC 13939 / DSM 20539 / JCM 16871 / CCUG 27074 / LMG 4051 / NBRC 15346 / NCIMB 9279 / VKM B-1422 / R1</strain>
    </source>
</reference>
<reference key="4">
    <citation type="journal article" date="2003" name="Mol. Cell">
        <title>Structural basis of the ribosomal machinery for peptide bond formation, translocation, and nascent chain progression.</title>
        <authorList>
            <person name="Bashan A."/>
            <person name="Agmon I."/>
            <person name="Zarivach R."/>
            <person name="Schluenzen F."/>
            <person name="Harms J."/>
            <person name="Berisio R."/>
            <person name="Bartels H."/>
            <person name="Franceschi F."/>
            <person name="Auerbach T."/>
            <person name="Hansen H.A."/>
            <person name="Kossoy E."/>
            <person name="Kessler M."/>
            <person name="Yonath A."/>
        </authorList>
    </citation>
    <scope>X-RAY CRYSTALLOGRAPHY (3.5 ANGSTROMS) OF THE 50S SUBUNIT IN COMPLEX WITH TRNA MIMICS</scope>
    <source>
        <strain>ATCC 13939 / DSM 20539 / JCM 16871 / CCUG 27074 / LMG 4051 / NBRC 15346 / NCIMB 9279 / VKM B-1422 / R1</strain>
    </source>
</reference>
<reference key="5">
    <citation type="journal article" date="2003" name="Structure">
        <title>Structural basis for the antibiotic activity of ketolides and azalides.</title>
        <authorList>
            <person name="Schluenzen F."/>
            <person name="Harms J.M."/>
            <person name="Franceschi F."/>
            <person name="Hansen H.A."/>
            <person name="Bartels H."/>
            <person name="Zarivach R."/>
            <person name="Yonath A."/>
        </authorList>
    </citation>
    <scope>X-RAY CRYSTALLOGRAPHY (3.3 ANGSTROMS) OF THE 50S SUBUNIT IN COMPLEX WITH MODIFIED MACROLIDE ANTIBIOTICS</scope>
    <source>
        <strain>ATCC 13939 / DSM 20539 / JCM 16871 / CCUG 27074 / LMG 4051 / NBRC 15346 / NCIMB 9279 / VKM B-1422 / R1</strain>
    </source>
</reference>
<reference key="6">
    <citation type="journal article" date="2003" name="Nat. Struct. Biol.">
        <title>Structural insight into the role of the ribosomal tunnel in cellular regulation.</title>
        <authorList>
            <person name="Berisio R."/>
            <person name="Schluenzen F."/>
            <person name="Harms J."/>
            <person name="Bashan A."/>
            <person name="Auerbach T."/>
            <person name="Baram D."/>
            <person name="Yonath A."/>
        </authorList>
    </citation>
    <scope>X-RAY CRYSTALLOGRAPHY (3.4 ANGSTROMS) OF THE 50S SUBUNIT IN COMPLEX WITH TROLEANDOMYCIN</scope>
    <source>
        <strain>ATCC 13939 / DSM 20539 / JCM 16871 / CCUG 27074 / LMG 4051 / NBRC 15346 / NCIMB 9279 / VKM B-1422 / R1</strain>
    </source>
</reference>
<reference key="7">
    <citation type="journal article" date="2004" name="BMC Biol.">
        <title>Alterations at the peptidyl transferase centre of the ribosome induced by the synergistic action of the streptogramins dalfopristin and quinupristin.</title>
        <authorList>
            <person name="Harms J.M."/>
            <person name="Schluenzen F."/>
            <person name="Fucini P."/>
            <person name="Bartels H."/>
            <person name="Yonath A."/>
        </authorList>
    </citation>
    <scope>X-RAY CRYSTALLOGRAPHY (3.4 ANGSTROMS) OF THE 50S SUBUNIT IN COMPLEX WITH THE STREPTOGRAMINS QUINUPRISTIN AND DALFOPRISTIN</scope>
    <source>
        <strain>ATCC 13939 / DSM 20539 / JCM 16871 / CCUG 27074 / LMG 4051 / NBRC 15346 / NCIMB 9279 / VKM B-1422 / R1</strain>
    </source>
</reference>
<reference key="8">
    <citation type="journal article" date="2004" name="Mol. Microbiol.">
        <title>Inhibition of peptide bond formation by pleuromutilins: the structure of the 50S ribosomal subunit from Deinococcus radiodurans in complex with tiamulin.</title>
        <authorList>
            <person name="Schluenzen F."/>
            <person name="Pyetan E."/>
            <person name="Fucini P."/>
            <person name="Yonath A."/>
            <person name="Harms J.M."/>
        </authorList>
    </citation>
    <scope>X-RAY CRYSTALLOGRAPHY (3.5 ANGSTROMS) OF THE 50S SUBUNIT IN COMPLEX WITH TIAMULIN</scope>
    <source>
        <strain>ATCC 13939 / DSM 20539 / JCM 16871 / CCUG 27074 / LMG 4051 / NBRC 15346 / NCIMB 9279 / VKM B-1422 / R1</strain>
    </source>
</reference>